<proteinExistence type="inferred from homology"/>
<gene>
    <name evidence="2" type="primary">ddl</name>
    <name type="ordered locus">HDEF_1781</name>
</gene>
<dbReference type="EC" id="6.3.2.4" evidence="2"/>
<dbReference type="EMBL" id="CP001277">
    <property type="protein sequence ID" value="ACQ68377.1"/>
    <property type="molecule type" value="Genomic_DNA"/>
</dbReference>
<dbReference type="RefSeq" id="WP_015874141.1">
    <property type="nucleotide sequence ID" value="NC_012751.1"/>
</dbReference>
<dbReference type="SMR" id="C4K734"/>
<dbReference type="STRING" id="572265.HDEF_1781"/>
<dbReference type="GeneID" id="66261372"/>
<dbReference type="KEGG" id="hde:HDEF_1781"/>
<dbReference type="eggNOG" id="COG1181">
    <property type="taxonomic scope" value="Bacteria"/>
</dbReference>
<dbReference type="HOGENOM" id="CLU_039268_1_2_6"/>
<dbReference type="UniPathway" id="UPA00219"/>
<dbReference type="Proteomes" id="UP000002334">
    <property type="component" value="Chromosome"/>
</dbReference>
<dbReference type="GO" id="GO:0005829">
    <property type="term" value="C:cytosol"/>
    <property type="evidence" value="ECO:0007669"/>
    <property type="project" value="TreeGrafter"/>
</dbReference>
<dbReference type="GO" id="GO:0005524">
    <property type="term" value="F:ATP binding"/>
    <property type="evidence" value="ECO:0007669"/>
    <property type="project" value="UniProtKB-KW"/>
</dbReference>
<dbReference type="GO" id="GO:0008716">
    <property type="term" value="F:D-alanine-D-alanine ligase activity"/>
    <property type="evidence" value="ECO:0007669"/>
    <property type="project" value="UniProtKB-UniRule"/>
</dbReference>
<dbReference type="GO" id="GO:0046872">
    <property type="term" value="F:metal ion binding"/>
    <property type="evidence" value="ECO:0007669"/>
    <property type="project" value="UniProtKB-KW"/>
</dbReference>
<dbReference type="GO" id="GO:0071555">
    <property type="term" value="P:cell wall organization"/>
    <property type="evidence" value="ECO:0007669"/>
    <property type="project" value="UniProtKB-KW"/>
</dbReference>
<dbReference type="GO" id="GO:0009252">
    <property type="term" value="P:peptidoglycan biosynthetic process"/>
    <property type="evidence" value="ECO:0007669"/>
    <property type="project" value="UniProtKB-UniRule"/>
</dbReference>
<dbReference type="GO" id="GO:0008360">
    <property type="term" value="P:regulation of cell shape"/>
    <property type="evidence" value="ECO:0007669"/>
    <property type="project" value="UniProtKB-KW"/>
</dbReference>
<dbReference type="FunFam" id="3.30.1490.20:FF:000007">
    <property type="entry name" value="D-alanine--D-alanine ligase"/>
    <property type="match status" value="1"/>
</dbReference>
<dbReference type="FunFam" id="3.30.470.20:FF:000008">
    <property type="entry name" value="D-alanine--D-alanine ligase"/>
    <property type="match status" value="1"/>
</dbReference>
<dbReference type="FunFam" id="3.40.50.20:FF:000013">
    <property type="entry name" value="D-alanine--D-alanine ligase"/>
    <property type="match status" value="1"/>
</dbReference>
<dbReference type="Gene3D" id="3.40.50.20">
    <property type="match status" value="1"/>
</dbReference>
<dbReference type="Gene3D" id="3.30.1490.20">
    <property type="entry name" value="ATP-grasp fold, A domain"/>
    <property type="match status" value="1"/>
</dbReference>
<dbReference type="Gene3D" id="3.30.470.20">
    <property type="entry name" value="ATP-grasp fold, B domain"/>
    <property type="match status" value="1"/>
</dbReference>
<dbReference type="HAMAP" id="MF_00047">
    <property type="entry name" value="Dala_Dala_lig"/>
    <property type="match status" value="1"/>
</dbReference>
<dbReference type="InterPro" id="IPR011761">
    <property type="entry name" value="ATP-grasp"/>
</dbReference>
<dbReference type="InterPro" id="IPR013815">
    <property type="entry name" value="ATP_grasp_subdomain_1"/>
</dbReference>
<dbReference type="InterPro" id="IPR000291">
    <property type="entry name" value="D-Ala_lig_Van_CS"/>
</dbReference>
<dbReference type="InterPro" id="IPR005905">
    <property type="entry name" value="D_ala_D_ala"/>
</dbReference>
<dbReference type="InterPro" id="IPR011095">
    <property type="entry name" value="Dala_Dala_lig_C"/>
</dbReference>
<dbReference type="InterPro" id="IPR011127">
    <property type="entry name" value="Dala_Dala_lig_N"/>
</dbReference>
<dbReference type="InterPro" id="IPR016185">
    <property type="entry name" value="PreATP-grasp_dom_sf"/>
</dbReference>
<dbReference type="NCBIfam" id="TIGR01205">
    <property type="entry name" value="D_ala_D_alaTIGR"/>
    <property type="match status" value="1"/>
</dbReference>
<dbReference type="NCBIfam" id="NF002378">
    <property type="entry name" value="PRK01372.1"/>
    <property type="match status" value="1"/>
</dbReference>
<dbReference type="PANTHER" id="PTHR23132">
    <property type="entry name" value="D-ALANINE--D-ALANINE LIGASE"/>
    <property type="match status" value="1"/>
</dbReference>
<dbReference type="PANTHER" id="PTHR23132:SF23">
    <property type="entry name" value="D-ALANINE--D-ALANINE LIGASE B"/>
    <property type="match status" value="1"/>
</dbReference>
<dbReference type="Pfam" id="PF07478">
    <property type="entry name" value="Dala_Dala_lig_C"/>
    <property type="match status" value="1"/>
</dbReference>
<dbReference type="Pfam" id="PF01820">
    <property type="entry name" value="Dala_Dala_lig_N"/>
    <property type="match status" value="1"/>
</dbReference>
<dbReference type="PIRSF" id="PIRSF039102">
    <property type="entry name" value="Ddl/VanB"/>
    <property type="match status" value="1"/>
</dbReference>
<dbReference type="SUPFAM" id="SSF56059">
    <property type="entry name" value="Glutathione synthetase ATP-binding domain-like"/>
    <property type="match status" value="1"/>
</dbReference>
<dbReference type="SUPFAM" id="SSF52440">
    <property type="entry name" value="PreATP-grasp domain"/>
    <property type="match status" value="1"/>
</dbReference>
<dbReference type="PROSITE" id="PS50975">
    <property type="entry name" value="ATP_GRASP"/>
    <property type="match status" value="1"/>
</dbReference>
<dbReference type="PROSITE" id="PS00843">
    <property type="entry name" value="DALA_DALA_LIGASE_1"/>
    <property type="match status" value="1"/>
</dbReference>
<dbReference type="PROSITE" id="PS00844">
    <property type="entry name" value="DALA_DALA_LIGASE_2"/>
    <property type="match status" value="1"/>
</dbReference>
<feature type="chain" id="PRO_1000202200" description="D-alanine--D-alanine ligase">
    <location>
        <begin position="1"/>
        <end position="320"/>
    </location>
</feature>
<feature type="domain" description="ATP-grasp" evidence="2">
    <location>
        <begin position="101"/>
        <end position="317"/>
    </location>
</feature>
<feature type="binding site" evidence="2">
    <location>
        <begin position="148"/>
        <end position="203"/>
    </location>
    <ligand>
        <name>ATP</name>
        <dbReference type="ChEBI" id="CHEBI:30616"/>
    </ligand>
</feature>
<feature type="binding site" evidence="2">
    <location>
        <position position="271"/>
    </location>
    <ligand>
        <name>Mg(2+)</name>
        <dbReference type="ChEBI" id="CHEBI:18420"/>
        <label>1</label>
    </ligand>
</feature>
<feature type="binding site" evidence="2">
    <location>
        <position position="284"/>
    </location>
    <ligand>
        <name>Mg(2+)</name>
        <dbReference type="ChEBI" id="CHEBI:18420"/>
        <label>1</label>
    </ligand>
</feature>
<feature type="binding site" evidence="2">
    <location>
        <position position="284"/>
    </location>
    <ligand>
        <name>Mg(2+)</name>
        <dbReference type="ChEBI" id="CHEBI:18420"/>
        <label>2</label>
    </ligand>
</feature>
<feature type="binding site" evidence="2">
    <location>
        <position position="286"/>
    </location>
    <ligand>
        <name>Mg(2+)</name>
        <dbReference type="ChEBI" id="CHEBI:18420"/>
        <label>2</label>
    </ligand>
</feature>
<name>DDL_HAMD5</name>
<organism>
    <name type="scientific">Hamiltonella defensa subsp. Acyrthosiphon pisum (strain 5AT)</name>
    <dbReference type="NCBI Taxonomy" id="572265"/>
    <lineage>
        <taxon>Bacteria</taxon>
        <taxon>Pseudomonadati</taxon>
        <taxon>Pseudomonadota</taxon>
        <taxon>Gammaproteobacteria</taxon>
        <taxon>Enterobacterales</taxon>
        <taxon>Enterobacteriaceae</taxon>
        <taxon>aphid secondary symbionts</taxon>
        <taxon>Candidatus Hamiltonella</taxon>
    </lineage>
</organism>
<reference key="1">
    <citation type="journal article" date="2009" name="Proc. Natl. Acad. Sci. U.S.A.">
        <title>Hamiltonella defensa, genome evolution of protective bacterial endosymbiont from pathogenic ancestors.</title>
        <authorList>
            <person name="Degnan P.H."/>
            <person name="Yu Y."/>
            <person name="Sisneros N."/>
            <person name="Wing R.A."/>
            <person name="Moran N.A."/>
        </authorList>
    </citation>
    <scope>NUCLEOTIDE SEQUENCE [LARGE SCALE GENOMIC DNA]</scope>
    <source>
        <strain>5AT</strain>
    </source>
</reference>
<accession>C4K734</accession>
<keyword id="KW-0067">ATP-binding</keyword>
<keyword id="KW-0133">Cell shape</keyword>
<keyword id="KW-0961">Cell wall biogenesis/degradation</keyword>
<keyword id="KW-0963">Cytoplasm</keyword>
<keyword id="KW-0436">Ligase</keyword>
<keyword id="KW-0460">Magnesium</keyword>
<keyword id="KW-0464">Manganese</keyword>
<keyword id="KW-0479">Metal-binding</keyword>
<keyword id="KW-0547">Nucleotide-binding</keyword>
<keyword id="KW-0573">Peptidoglycan synthesis</keyword>
<comment type="function">
    <text evidence="2">Cell wall formation.</text>
</comment>
<comment type="catalytic activity">
    <reaction evidence="2">
        <text>2 D-alanine + ATP = D-alanyl-D-alanine + ADP + phosphate + H(+)</text>
        <dbReference type="Rhea" id="RHEA:11224"/>
        <dbReference type="ChEBI" id="CHEBI:15378"/>
        <dbReference type="ChEBI" id="CHEBI:30616"/>
        <dbReference type="ChEBI" id="CHEBI:43474"/>
        <dbReference type="ChEBI" id="CHEBI:57416"/>
        <dbReference type="ChEBI" id="CHEBI:57822"/>
        <dbReference type="ChEBI" id="CHEBI:456216"/>
        <dbReference type="EC" id="6.3.2.4"/>
    </reaction>
</comment>
<comment type="cofactor">
    <cofactor evidence="1">
        <name>Mg(2+)</name>
        <dbReference type="ChEBI" id="CHEBI:18420"/>
    </cofactor>
    <cofactor evidence="1">
        <name>Mn(2+)</name>
        <dbReference type="ChEBI" id="CHEBI:29035"/>
    </cofactor>
    <text evidence="1">Binds 2 magnesium or manganese ions per subunit.</text>
</comment>
<comment type="pathway">
    <text evidence="2">Cell wall biogenesis; peptidoglycan biosynthesis.</text>
</comment>
<comment type="subcellular location">
    <subcellularLocation>
        <location evidence="2">Cytoplasm</location>
    </subcellularLocation>
</comment>
<comment type="similarity">
    <text evidence="2">Belongs to the D-alanine--D-alanine ligase family.</text>
</comment>
<sequence length="320" mass="35514">MPEKVAVLLGGTSSERQISLQSGHAVVAGLREAGIDARPIDTKNFLVTELKEKGFTKAFIALHGRDGEDGHLQAVLEFLKIPYTGSGVMASALAMDKHRSKMIFQGAGLPVSPYVALNREQIWPNVTQNTSNDLLLNNRISNKLIKNINQLGLPLIVKPSREGSSFGMTKVEHLDQLDDALKKAWHYDEEILVEKWHFGTELTVAILGDTVLPSIRIQVSDIFYDYQAKYVSDKTQYFCPSGLKQEQEKQLATLSMNAYRALGCDGWGRVDVMLDDEGHFYLMEINTAPGMTDHSLFPMAARQAGFSFSELVCKILSLAH</sequence>
<evidence type="ECO:0000250" key="1"/>
<evidence type="ECO:0000255" key="2">
    <source>
        <dbReference type="HAMAP-Rule" id="MF_00047"/>
    </source>
</evidence>
<protein>
    <recommendedName>
        <fullName evidence="2">D-alanine--D-alanine ligase</fullName>
        <ecNumber evidence="2">6.3.2.4</ecNumber>
    </recommendedName>
    <alternativeName>
        <fullName evidence="2">D-Ala-D-Ala ligase</fullName>
    </alternativeName>
    <alternativeName>
        <fullName evidence="2">D-alanylalanine synthetase</fullName>
    </alternativeName>
</protein>